<keyword id="KW-0963">Cytoplasm</keyword>
<keyword id="KW-1185">Reference proteome</keyword>
<keyword id="KW-0690">Ribosome biogenesis</keyword>
<keyword id="KW-0698">rRNA processing</keyword>
<keyword id="KW-0949">S-adenosyl-L-methionine</keyword>
<keyword id="KW-0808">Transferase</keyword>
<gene>
    <name type="ordered locus">MA_2508</name>
</gene>
<dbReference type="EC" id="2.5.1.157" evidence="2"/>
<dbReference type="EMBL" id="AE010299">
    <property type="protein sequence ID" value="AAM05894.1"/>
    <property type="molecule type" value="Genomic_DNA"/>
</dbReference>
<dbReference type="SMR" id="Q8TMY6"/>
<dbReference type="FunCoup" id="Q8TMY6">
    <property type="interactions" value="91"/>
</dbReference>
<dbReference type="STRING" id="188937.MA_2508"/>
<dbReference type="EnsemblBacteria" id="AAM05894">
    <property type="protein sequence ID" value="AAM05894"/>
    <property type="gene ID" value="MA_2508"/>
</dbReference>
<dbReference type="KEGG" id="mac:MA_2508"/>
<dbReference type="HOGENOM" id="CLU_035060_4_1_2"/>
<dbReference type="InParanoid" id="Q8TMY6"/>
<dbReference type="PhylomeDB" id="Q8TMY6"/>
<dbReference type="Proteomes" id="UP000002487">
    <property type="component" value="Chromosome"/>
</dbReference>
<dbReference type="GO" id="GO:0005737">
    <property type="term" value="C:cytoplasm"/>
    <property type="evidence" value="ECO:0007669"/>
    <property type="project" value="UniProtKB-SubCell"/>
</dbReference>
<dbReference type="GO" id="GO:0106388">
    <property type="term" value="F:18S rRNA aminocarboxypropyltransferase activity"/>
    <property type="evidence" value="ECO:0007669"/>
    <property type="project" value="InterPro"/>
</dbReference>
<dbReference type="GO" id="GO:1904047">
    <property type="term" value="F:S-adenosyl-L-methionine binding"/>
    <property type="evidence" value="ECO:0007669"/>
    <property type="project" value="UniProtKB-UniRule"/>
</dbReference>
<dbReference type="GO" id="GO:0000455">
    <property type="term" value="P:enzyme-directed rRNA pseudouridine synthesis"/>
    <property type="evidence" value="ECO:0007669"/>
    <property type="project" value="UniProtKB-UniRule"/>
</dbReference>
<dbReference type="HAMAP" id="MF_01116">
    <property type="entry name" value="TSR3"/>
    <property type="match status" value="1"/>
</dbReference>
<dbReference type="InterPro" id="IPR007209">
    <property type="entry name" value="RNaseL-inhib-like_metal-bd_dom"/>
</dbReference>
<dbReference type="InterPro" id="IPR022968">
    <property type="entry name" value="Tsr3-like"/>
</dbReference>
<dbReference type="InterPro" id="IPR007177">
    <property type="entry name" value="Tsr3_C"/>
</dbReference>
<dbReference type="NCBIfam" id="NF002621">
    <property type="entry name" value="PRK02287.1"/>
    <property type="match status" value="1"/>
</dbReference>
<dbReference type="PANTHER" id="PTHR20426:SF0">
    <property type="entry name" value="18S RRNA AMINOCARBOXYPROPYLTRANSFERASE"/>
    <property type="match status" value="1"/>
</dbReference>
<dbReference type="PANTHER" id="PTHR20426">
    <property type="entry name" value="RIBOSOME BIOGENESIS PROTEIN TSR3 HOMOLOG"/>
    <property type="match status" value="1"/>
</dbReference>
<dbReference type="Pfam" id="PF04068">
    <property type="entry name" value="Fer4_RLI"/>
    <property type="match status" value="1"/>
</dbReference>
<dbReference type="Pfam" id="PF04034">
    <property type="entry name" value="Ribo_biogen_C"/>
    <property type="match status" value="1"/>
</dbReference>
<sequence length="174" mass="19894">MMNPTNSRDVPLYIYHAGQCDPKKCTGRKMARFELARLYDKISRLPRSAILLDPMAEKALSPADDPKKGIIVLDCSWEEVERVFPELEKLNLEHRALPYMLAGNPVNFGRPFKLNSAEAFAAALYILGYKEQAEKVMSKFNWGHSFLELNREPLDEYATAKNSSEIVEIQSHYI</sequence>
<name>TSR3_METAC</name>
<feature type="chain" id="PRO_0000094417" description="16S rRNA aminocarboxypropyltransferase">
    <location>
        <begin position="1"/>
        <end position="174"/>
    </location>
</feature>
<feature type="binding site" evidence="1 2">
    <location>
        <position position="26"/>
    </location>
    <ligand>
        <name>S-adenosyl-L-methionine</name>
        <dbReference type="ChEBI" id="CHEBI:59789"/>
    </ligand>
</feature>
<feature type="binding site" evidence="2">
    <location>
        <position position="73"/>
    </location>
    <ligand>
        <name>S-adenosyl-L-methionine</name>
        <dbReference type="ChEBI" id="CHEBI:59789"/>
    </ligand>
</feature>
<feature type="binding site" evidence="1 2">
    <location>
        <position position="97"/>
    </location>
    <ligand>
        <name>S-adenosyl-L-methionine</name>
        <dbReference type="ChEBI" id="CHEBI:59789"/>
    </ligand>
</feature>
<feature type="binding site" evidence="2">
    <location>
        <position position="116"/>
    </location>
    <ligand>
        <name>S-adenosyl-L-methionine</name>
        <dbReference type="ChEBI" id="CHEBI:59789"/>
    </ligand>
</feature>
<proteinExistence type="inferred from homology"/>
<evidence type="ECO:0000250" key="1">
    <source>
        <dbReference type="UniProtKB" id="E1QU22"/>
    </source>
</evidence>
<evidence type="ECO:0000255" key="2">
    <source>
        <dbReference type="HAMAP-Rule" id="MF_01116"/>
    </source>
</evidence>
<evidence type="ECO:0000305" key="3"/>
<accession>Q8TMY6</accession>
<organism>
    <name type="scientific">Methanosarcina acetivorans (strain ATCC 35395 / DSM 2834 / JCM 12185 / C2A)</name>
    <dbReference type="NCBI Taxonomy" id="188937"/>
    <lineage>
        <taxon>Archaea</taxon>
        <taxon>Methanobacteriati</taxon>
        <taxon>Methanobacteriota</taxon>
        <taxon>Stenosarchaea group</taxon>
        <taxon>Methanomicrobia</taxon>
        <taxon>Methanosarcinales</taxon>
        <taxon>Methanosarcinaceae</taxon>
        <taxon>Methanosarcina</taxon>
    </lineage>
</organism>
<comment type="function">
    <text evidence="2">Aminocarboxypropyltransferase that catalyzes the aminocarboxypropyl transfer on pseudouridine corresponding to position 914 in M.jannaschii 16S rRNA. It constitutes the last step in biosynthesis of the hypermodified N1-methyl-N3-(3-amino-3-carboxypropyl) pseudouridine (m1acp3-Psi).</text>
</comment>
<comment type="catalytic activity">
    <reaction evidence="2">
        <text>an N(1)-methylpseudouridine in rRNA + S-adenosyl-L-methionine = N(1)-methyl-N(3)-[(3S)-3-amino-3-carboxypropyl]pseudouridine in rRNA + S-methyl-5'-thioadenosine + H(+)</text>
        <dbReference type="Rhea" id="RHEA:63296"/>
        <dbReference type="Rhea" id="RHEA-COMP:11634"/>
        <dbReference type="Rhea" id="RHEA-COMP:16310"/>
        <dbReference type="ChEBI" id="CHEBI:15378"/>
        <dbReference type="ChEBI" id="CHEBI:17509"/>
        <dbReference type="ChEBI" id="CHEBI:59789"/>
        <dbReference type="ChEBI" id="CHEBI:74890"/>
        <dbReference type="ChEBI" id="CHEBI:146234"/>
        <dbReference type="EC" id="2.5.1.157"/>
    </reaction>
</comment>
<comment type="subcellular location">
    <subcellularLocation>
        <location evidence="2">Cytoplasm</location>
    </subcellularLocation>
</comment>
<comment type="similarity">
    <text evidence="2">Belongs to the TDD superfamily. TSR3 family.</text>
</comment>
<reference key="1">
    <citation type="journal article" date="2002" name="Genome Res.">
        <title>The genome of Methanosarcina acetivorans reveals extensive metabolic and physiological diversity.</title>
        <authorList>
            <person name="Galagan J.E."/>
            <person name="Nusbaum C."/>
            <person name="Roy A."/>
            <person name="Endrizzi M.G."/>
            <person name="Macdonald P."/>
            <person name="FitzHugh W."/>
            <person name="Calvo S."/>
            <person name="Engels R."/>
            <person name="Smirnov S."/>
            <person name="Atnoor D."/>
            <person name="Brown A."/>
            <person name="Allen N."/>
            <person name="Naylor J."/>
            <person name="Stange-Thomann N."/>
            <person name="DeArellano K."/>
            <person name="Johnson R."/>
            <person name="Linton L."/>
            <person name="McEwan P."/>
            <person name="McKernan K."/>
            <person name="Talamas J."/>
            <person name="Tirrell A."/>
            <person name="Ye W."/>
            <person name="Zimmer A."/>
            <person name="Barber R.D."/>
            <person name="Cann I."/>
            <person name="Graham D.E."/>
            <person name="Grahame D.A."/>
            <person name="Guss A.M."/>
            <person name="Hedderich R."/>
            <person name="Ingram-Smith C."/>
            <person name="Kuettner H.C."/>
            <person name="Krzycki J.A."/>
            <person name="Leigh J.A."/>
            <person name="Li W."/>
            <person name="Liu J."/>
            <person name="Mukhopadhyay B."/>
            <person name="Reeve J.N."/>
            <person name="Smith K."/>
            <person name="Springer T.A."/>
            <person name="Umayam L.A."/>
            <person name="White O."/>
            <person name="White R.H."/>
            <person name="de Macario E.C."/>
            <person name="Ferry J.G."/>
            <person name="Jarrell K.F."/>
            <person name="Jing H."/>
            <person name="Macario A.J.L."/>
            <person name="Paulsen I.T."/>
            <person name="Pritchett M."/>
            <person name="Sowers K.R."/>
            <person name="Swanson R.V."/>
            <person name="Zinder S.H."/>
            <person name="Lander E."/>
            <person name="Metcalf W.W."/>
            <person name="Birren B."/>
        </authorList>
    </citation>
    <scope>NUCLEOTIDE SEQUENCE [LARGE SCALE GENOMIC DNA]</scope>
    <source>
        <strain>ATCC 35395 / DSM 2834 / JCM 12185 / C2A</strain>
    </source>
</reference>
<protein>
    <recommendedName>
        <fullName evidence="2 3">16S rRNA aminocarboxypropyltransferase</fullName>
        <ecNumber evidence="2">2.5.1.157</ecNumber>
    </recommendedName>
</protein>